<dbReference type="EMBL" id="M73524">
    <property type="protein sequence ID" value="AAA43128.1"/>
    <property type="molecule type" value="Genomic_RNA"/>
</dbReference>
<dbReference type="RefSeq" id="YP_308855.1">
    <property type="nucleotide sequence ID" value="NC_007378.1"/>
</dbReference>
<dbReference type="SMR" id="P26108"/>
<dbReference type="GeneID" id="3655109"/>
<dbReference type="KEGG" id="vg:3655109"/>
<dbReference type="OrthoDB" id="431at10239"/>
<dbReference type="Proteomes" id="UP000200640">
    <property type="component" value="Genome"/>
</dbReference>
<dbReference type="GO" id="GO:0033650">
    <property type="term" value="C:host cell mitochondrion"/>
    <property type="evidence" value="ECO:0007669"/>
    <property type="project" value="UniProtKB-SubCell"/>
</dbReference>
<dbReference type="GO" id="GO:0042025">
    <property type="term" value="C:host cell nucleus"/>
    <property type="evidence" value="ECO:0007669"/>
    <property type="project" value="UniProtKB-SubCell"/>
</dbReference>
<dbReference type="GO" id="GO:0044423">
    <property type="term" value="C:virion component"/>
    <property type="evidence" value="ECO:0007669"/>
    <property type="project" value="UniProtKB-UniRule"/>
</dbReference>
<dbReference type="GO" id="GO:0003723">
    <property type="term" value="F:RNA binding"/>
    <property type="evidence" value="ECO:0007669"/>
    <property type="project" value="UniProtKB-UniRule"/>
</dbReference>
<dbReference type="GO" id="GO:0003968">
    <property type="term" value="F:RNA-directed RNA polymerase activity"/>
    <property type="evidence" value="ECO:0007669"/>
    <property type="project" value="UniProtKB-UniRule"/>
</dbReference>
<dbReference type="GO" id="GO:0006370">
    <property type="term" value="P:7-methylguanosine mRNA capping"/>
    <property type="evidence" value="ECO:0007669"/>
    <property type="project" value="UniProtKB-UniRule"/>
</dbReference>
<dbReference type="GO" id="GO:0075526">
    <property type="term" value="P:cap snatching"/>
    <property type="evidence" value="ECO:0007669"/>
    <property type="project" value="UniProtKB-UniRule"/>
</dbReference>
<dbReference type="GO" id="GO:0006351">
    <property type="term" value="P:DNA-templated transcription"/>
    <property type="evidence" value="ECO:0007669"/>
    <property type="project" value="UniProtKB-UniRule"/>
</dbReference>
<dbReference type="GO" id="GO:0039545">
    <property type="term" value="P:symbiont-mediated suppression of host cytoplasmic pattern recognition receptor signaling pathway via inhibition of MAVS activity"/>
    <property type="evidence" value="ECO:0007669"/>
    <property type="project" value="UniProtKB-UniRule"/>
</dbReference>
<dbReference type="GO" id="GO:0039657">
    <property type="term" value="P:symbiont-mediated suppression of host gene expression"/>
    <property type="evidence" value="ECO:0007669"/>
    <property type="project" value="UniProtKB-KW"/>
</dbReference>
<dbReference type="GO" id="GO:0039523">
    <property type="term" value="P:symbiont-mediated suppression of host mRNA transcription via inhibition of RNA polymerase II activity"/>
    <property type="evidence" value="ECO:0007669"/>
    <property type="project" value="UniProtKB-UniRule"/>
</dbReference>
<dbReference type="GO" id="GO:0039694">
    <property type="term" value="P:viral RNA genome replication"/>
    <property type="evidence" value="ECO:0007669"/>
    <property type="project" value="InterPro"/>
</dbReference>
<dbReference type="FunFam" id="3.30.30.90:FF:000001">
    <property type="entry name" value="Polymerase basic protein 2"/>
    <property type="match status" value="1"/>
</dbReference>
<dbReference type="Gene3D" id="3.30.30.90">
    <property type="entry name" value="Polymerase Basic Protein 2, C-terminal domain"/>
    <property type="match status" value="1"/>
</dbReference>
<dbReference type="HAMAP" id="MF_04062">
    <property type="entry name" value="INV_PB2"/>
    <property type="match status" value="1"/>
</dbReference>
<dbReference type="InterPro" id="IPR049110">
    <property type="entry name" value="Flu_PB2_2nd"/>
</dbReference>
<dbReference type="InterPro" id="IPR049114">
    <property type="entry name" value="Flu_PB2_6th"/>
</dbReference>
<dbReference type="InterPro" id="IPR049115">
    <property type="entry name" value="Flu_PB2_C"/>
</dbReference>
<dbReference type="InterPro" id="IPR048298">
    <property type="entry name" value="Flu_PB2_CAP-bd"/>
</dbReference>
<dbReference type="InterPro" id="IPR049111">
    <property type="entry name" value="Flu_PB2_middle"/>
</dbReference>
<dbReference type="InterPro" id="IPR049106">
    <property type="entry name" value="Flu_PB2_N"/>
</dbReference>
<dbReference type="InterPro" id="IPR001591">
    <property type="entry name" value="INV_PB2"/>
</dbReference>
<dbReference type="InterPro" id="IPR049113">
    <property type="entry name" value="PB2_helical"/>
</dbReference>
<dbReference type="InterPro" id="IPR037258">
    <property type="entry name" value="PDB2_C"/>
</dbReference>
<dbReference type="Pfam" id="PF20947">
    <property type="entry name" value="Flu_PB2_1st"/>
    <property type="match status" value="1"/>
</dbReference>
<dbReference type="Pfam" id="PF20948">
    <property type="entry name" value="Flu_PB2_2nd"/>
    <property type="match status" value="1"/>
</dbReference>
<dbReference type="Pfam" id="PF20949">
    <property type="entry name" value="Flu_PB2_3rd"/>
    <property type="match status" value="1"/>
</dbReference>
<dbReference type="Pfam" id="PF20950">
    <property type="entry name" value="Flu_PB2_4th"/>
    <property type="match status" value="1"/>
</dbReference>
<dbReference type="Pfam" id="PF00604">
    <property type="entry name" value="Flu_PB2_5th"/>
    <property type="match status" value="1"/>
</dbReference>
<dbReference type="Pfam" id="PF20951">
    <property type="entry name" value="Flu_PB2_6th"/>
    <property type="match status" value="1"/>
</dbReference>
<dbReference type="Pfam" id="PF20952">
    <property type="entry name" value="Flu_PB2_7th"/>
    <property type="match status" value="1"/>
</dbReference>
<dbReference type="SUPFAM" id="SSF160453">
    <property type="entry name" value="PB2 C-terminal domain-like"/>
    <property type="match status" value="1"/>
</dbReference>
<organismHost>
    <name type="scientific">Aves</name>
    <dbReference type="NCBI Taxonomy" id="8782"/>
</organismHost>
<organismHost>
    <name type="scientific">Homo sapiens</name>
    <name type="common">Human</name>
    <dbReference type="NCBI Taxonomy" id="9606"/>
</organismHost>
<sequence length="759" mass="86077">MERIKELRNLMSQSRTREILTKTTVDHMAIIKKYTSGRQEKNPSLRMKWMMAMKYPITADKRITEMVPERNEQGQTLWSKMSDAGSDRVMVSPLAVTWWNRNGPMTSTVHYPKIYKTYFEKVERLKHGTFGPVHFRNQVKIRRRVDINPGHADLSAKEAQDVIMEVVFPNEVGARILTSESQLTITKEKKEELQDCKISPLMVAYMLERELVRKTRFLPVAGGTSSVYIEVLHLTQGTCWEQMYTPGGEVRNDDVDQSLIIAARNIVRRAAVSADPLASLLEMCHSTQIGGTRMVDILRQNPTEEQAVDICKAAMGLRISSSFSFGGFTFKRTSGSSIKREEEVLTGNLQTLKIRVHEGYEEFTMVGKRATAILRKATRRLVQLIVSGRDEQSIAEAIIVAMVFSQEDCMIKAVRGDLNFVNRANQRLNPMHQLLRHFQKDAKVLFQNWGIEHIDNVMGMIGVLPDMTPSTEMSMRGIRVSKMGVDEYSSTERVVVSIDRFLRVRDQRGNVLLSPEEVSETQGTEKLTITYSSSMMWEINGPESVLVNTYQWIIRNWETVKIQWSQNPTMLYNKMEFEPFQSLVPKAIRGQYSGFVRTLFQQMRDVLGTFDTTQIIKLLPFAAAPPKQSRMQFSSLTVNVRGSGMRILVRGNSPVFNYNKTTKRLTILGKDAGTLTEDPDEGTSGVESAVLRGFLILGKEDRRYGPALSINELSTLAKGEKANVLIGQGDVVLVMKRKRDSSILTDSQTATKRIRMAIN</sequence>
<evidence type="ECO:0000255" key="1">
    <source>
        <dbReference type="HAMAP-Rule" id="MF_04062"/>
    </source>
</evidence>
<comment type="function">
    <text evidence="1">Plays an essential role in transcription initiation and cap-stealing mechanism, in which cellular capped pre-mRNAs are used to generate primers for viral transcription. Recognizes and binds the 7-methylguanosine-containing cap of the target pre-RNA which is subsequently cleaved after 10-13 nucleotides by the viral protein PA. Plays a role in the initiation of the viral genome replication and modulates the activity of the ribonucleoprotein (RNP) complex. In addition, participates in the inhibition of type I interferon induction through interaction with and inhibition of the host mitochondrial antiviral signaling protein MAVS.</text>
</comment>
<comment type="subunit">
    <text evidence="1">Influenza RNA polymerase is composed of three subunits: PB1, PB2 and PA. Interacts (via N-terminus) with PB1 (via C-terminus). Interacts with nucleoprotein NP (via N-terminus). Interacts (via N-terminus) with host MAVS (via N-terminus); this interaction inhibits host innate immune response.</text>
</comment>
<comment type="subcellular location">
    <subcellularLocation>
        <location evidence="1">Virion</location>
    </subcellularLocation>
    <subcellularLocation>
        <location evidence="1">Host nucleus</location>
    </subcellularLocation>
    <subcellularLocation>
        <location evidence="1">Host mitochondrion</location>
    </subcellularLocation>
</comment>
<comment type="similarity">
    <text evidence="1">Belongs to the influenza viruses PB2 family.</text>
</comment>
<reference key="1">
    <citation type="journal article" date="1990" name="J. Virol.">
        <title>Evolution of influenza A virus PB2 genes: implications for evolution of the ribonucleoprotein complex and origin of human influenza A virus.</title>
        <authorList>
            <person name="Gorman O.T."/>
            <person name="Donis R.O."/>
            <person name="Kawaoka Y."/>
            <person name="Webster R.G."/>
        </authorList>
    </citation>
    <scope>NUCLEOTIDE SEQUENCE [GENOMIC RNA]</scope>
</reference>
<keyword id="KW-1157">Cap snatching</keyword>
<keyword id="KW-1262">Eukaryotic host gene expression shutoff by virus</keyword>
<keyword id="KW-1191">Eukaryotic host transcription shutoff by virus</keyword>
<keyword id="KW-1190">Host gene expression shutoff by virus</keyword>
<keyword id="KW-1045">Host mitochondrion</keyword>
<keyword id="KW-1048">Host nucleus</keyword>
<keyword id="KW-0945">Host-virus interaction</keyword>
<keyword id="KW-1090">Inhibition of host innate immune response by virus</keyword>
<keyword id="KW-1097">Inhibition of host MAVS by virus</keyword>
<keyword id="KW-1113">Inhibition of host RLR pathway by virus</keyword>
<keyword id="KW-1104">Inhibition of host RNA polymerase II by virus</keyword>
<keyword id="KW-0506">mRNA capping</keyword>
<keyword id="KW-0507">mRNA processing</keyword>
<keyword id="KW-0899">Viral immunoevasion</keyword>
<keyword id="KW-1195">Viral transcription</keyword>
<keyword id="KW-0946">Virion</keyword>
<name>PB2_I68A5</name>
<protein>
    <recommendedName>
        <fullName evidence="1">Polymerase basic protein 2</fullName>
    </recommendedName>
    <alternativeName>
        <fullName evidence="1">RNA-directed RNA polymerase subunit P3</fullName>
    </alternativeName>
</protein>
<proteinExistence type="inferred from homology"/>
<organism>
    <name type="scientific">Influenza A virus (strain A/Korea/426/1968 H2N2)</name>
    <dbReference type="NCBI Taxonomy" id="488241"/>
    <lineage>
        <taxon>Viruses</taxon>
        <taxon>Riboviria</taxon>
        <taxon>Orthornavirae</taxon>
        <taxon>Negarnaviricota</taxon>
        <taxon>Polyploviricotina</taxon>
        <taxon>Insthoviricetes</taxon>
        <taxon>Articulavirales</taxon>
        <taxon>Orthomyxoviridae</taxon>
        <taxon>Alphainfluenzavirus</taxon>
        <taxon>Alphainfluenzavirus influenzae</taxon>
        <taxon>Influenza A virus</taxon>
    </lineage>
</organism>
<accession>P26108</accession>
<feature type="chain" id="PRO_0000078827" description="Polymerase basic protein 2">
    <location>
        <begin position="1"/>
        <end position="759"/>
    </location>
</feature>
<feature type="short sequence motif" description="Nuclear localization signal" evidence="1">
    <location>
        <begin position="736"/>
        <end position="739"/>
    </location>
</feature>
<feature type="site" description="Mammalian adaptation" evidence="1">
    <location>
        <position position="627"/>
    </location>
</feature>
<gene>
    <name evidence="1" type="primary">PB2</name>
</gene>